<organism>
    <name type="scientific">Streptococcus equi subsp. zooepidemicus (strain H70)</name>
    <dbReference type="NCBI Taxonomy" id="553483"/>
    <lineage>
        <taxon>Bacteria</taxon>
        <taxon>Bacillati</taxon>
        <taxon>Bacillota</taxon>
        <taxon>Bacilli</taxon>
        <taxon>Lactobacillales</taxon>
        <taxon>Streptococcaceae</taxon>
        <taxon>Streptococcus</taxon>
    </lineage>
</organism>
<feature type="chain" id="PRO_1000204220" description="Pantothenate kinase">
    <location>
        <begin position="1"/>
        <end position="306"/>
    </location>
</feature>
<feature type="binding site" evidence="1">
    <location>
        <begin position="91"/>
        <end position="98"/>
    </location>
    <ligand>
        <name>ATP</name>
        <dbReference type="ChEBI" id="CHEBI:30616"/>
    </ligand>
</feature>
<comment type="catalytic activity">
    <reaction evidence="1">
        <text>(R)-pantothenate + ATP = (R)-4'-phosphopantothenate + ADP + H(+)</text>
        <dbReference type="Rhea" id="RHEA:16373"/>
        <dbReference type="ChEBI" id="CHEBI:10986"/>
        <dbReference type="ChEBI" id="CHEBI:15378"/>
        <dbReference type="ChEBI" id="CHEBI:29032"/>
        <dbReference type="ChEBI" id="CHEBI:30616"/>
        <dbReference type="ChEBI" id="CHEBI:456216"/>
        <dbReference type="EC" id="2.7.1.33"/>
    </reaction>
</comment>
<comment type="pathway">
    <text evidence="1">Cofactor biosynthesis; coenzyme A biosynthesis; CoA from (R)-pantothenate: step 1/5.</text>
</comment>
<comment type="subcellular location">
    <subcellularLocation>
        <location evidence="1">Cytoplasm</location>
    </subcellularLocation>
</comment>
<comment type="similarity">
    <text evidence="1">Belongs to the prokaryotic pantothenate kinase family.</text>
</comment>
<proteinExistence type="inferred from homology"/>
<evidence type="ECO:0000255" key="1">
    <source>
        <dbReference type="HAMAP-Rule" id="MF_00215"/>
    </source>
</evidence>
<reference key="1">
    <citation type="journal article" date="2009" name="PLoS Pathog.">
        <title>Genomic evidence for the evolution of Streptococcus equi: host restriction, increased virulence, and genetic exchange with human pathogens.</title>
        <authorList>
            <person name="Holden M.T.G."/>
            <person name="Heather Z."/>
            <person name="Paillot R."/>
            <person name="Steward K.F."/>
            <person name="Webb K."/>
            <person name="Ainslie F."/>
            <person name="Jourdan T."/>
            <person name="Bason N.C."/>
            <person name="Holroyd N.E."/>
            <person name="Mungall K."/>
            <person name="Quail M.A."/>
            <person name="Sanders M."/>
            <person name="Simmonds M."/>
            <person name="Willey D."/>
            <person name="Brooks K."/>
            <person name="Aanensen D.M."/>
            <person name="Spratt B.G."/>
            <person name="Jolley K.A."/>
            <person name="Maiden M.C.J."/>
            <person name="Kehoe M."/>
            <person name="Chanter N."/>
            <person name="Bentley S.D."/>
            <person name="Robinson C."/>
            <person name="Maskell D.J."/>
            <person name="Parkhill J."/>
            <person name="Waller A.S."/>
        </authorList>
    </citation>
    <scope>NUCLEOTIDE SEQUENCE [LARGE SCALE GENOMIC DNA]</scope>
    <source>
        <strain>H70</strain>
    </source>
</reference>
<keyword id="KW-0067">ATP-binding</keyword>
<keyword id="KW-0173">Coenzyme A biosynthesis</keyword>
<keyword id="KW-0963">Cytoplasm</keyword>
<keyword id="KW-0418">Kinase</keyword>
<keyword id="KW-0547">Nucleotide-binding</keyword>
<keyword id="KW-0808">Transferase</keyword>
<sequence>MSNEFITFEKISRKSWKQLHQKSKPLLTQEELTNITSLNDNIDINDVIEVYLPLIHLIQIYKIAQENLSFSKSLFLKKDIQQRPFIIGISGSVAVGKSTTSRLLQLLLARTHKTSTVELVTTDGFLYPNSTLIKNNMLNRKGFPESYNMELLLNFLDTVKGGQTASAPVYSHEIYDIVPDQQQTFTNPDFLIIEGINVFQNQQNNRLYMSDYFDFSIYIDADSHHIEQWYLERFLSLLELAKHDPANYYARYTSLPQNEAIAFAKKVWKTINLENLEKFIEPTRNRAELILHKAADHKIDEIYLKK</sequence>
<dbReference type="EC" id="2.7.1.33" evidence="1"/>
<dbReference type="EMBL" id="FM204884">
    <property type="protein sequence ID" value="CAW99375.1"/>
    <property type="molecule type" value="Genomic_DNA"/>
</dbReference>
<dbReference type="SMR" id="C0MG55"/>
<dbReference type="KEGG" id="seq:SZO_10290"/>
<dbReference type="eggNOG" id="COG1072">
    <property type="taxonomic scope" value="Bacteria"/>
</dbReference>
<dbReference type="HOGENOM" id="CLU_053818_1_1_9"/>
<dbReference type="UniPathway" id="UPA00241">
    <property type="reaction ID" value="UER00352"/>
</dbReference>
<dbReference type="Proteomes" id="UP000001368">
    <property type="component" value="Chromosome"/>
</dbReference>
<dbReference type="GO" id="GO:0005737">
    <property type="term" value="C:cytoplasm"/>
    <property type="evidence" value="ECO:0007669"/>
    <property type="project" value="UniProtKB-SubCell"/>
</dbReference>
<dbReference type="GO" id="GO:0005524">
    <property type="term" value="F:ATP binding"/>
    <property type="evidence" value="ECO:0007669"/>
    <property type="project" value="UniProtKB-UniRule"/>
</dbReference>
<dbReference type="GO" id="GO:0004594">
    <property type="term" value="F:pantothenate kinase activity"/>
    <property type="evidence" value="ECO:0007669"/>
    <property type="project" value="UniProtKB-UniRule"/>
</dbReference>
<dbReference type="GO" id="GO:0015937">
    <property type="term" value="P:coenzyme A biosynthetic process"/>
    <property type="evidence" value="ECO:0007669"/>
    <property type="project" value="UniProtKB-UniRule"/>
</dbReference>
<dbReference type="CDD" id="cd02025">
    <property type="entry name" value="PanK"/>
    <property type="match status" value="1"/>
</dbReference>
<dbReference type="Gene3D" id="3.40.50.300">
    <property type="entry name" value="P-loop containing nucleotide triphosphate hydrolases"/>
    <property type="match status" value="1"/>
</dbReference>
<dbReference type="HAMAP" id="MF_00215">
    <property type="entry name" value="Pantothen_kinase_1"/>
    <property type="match status" value="1"/>
</dbReference>
<dbReference type="InterPro" id="IPR027417">
    <property type="entry name" value="P-loop_NTPase"/>
</dbReference>
<dbReference type="InterPro" id="IPR004566">
    <property type="entry name" value="PanK"/>
</dbReference>
<dbReference type="InterPro" id="IPR006083">
    <property type="entry name" value="PRK/URK"/>
</dbReference>
<dbReference type="NCBIfam" id="TIGR00554">
    <property type="entry name" value="panK_bact"/>
    <property type="match status" value="1"/>
</dbReference>
<dbReference type="PANTHER" id="PTHR10285">
    <property type="entry name" value="URIDINE KINASE"/>
    <property type="match status" value="1"/>
</dbReference>
<dbReference type="Pfam" id="PF00485">
    <property type="entry name" value="PRK"/>
    <property type="match status" value="1"/>
</dbReference>
<dbReference type="PIRSF" id="PIRSF000545">
    <property type="entry name" value="Pantothenate_kin"/>
    <property type="match status" value="1"/>
</dbReference>
<dbReference type="SUPFAM" id="SSF52540">
    <property type="entry name" value="P-loop containing nucleoside triphosphate hydrolases"/>
    <property type="match status" value="1"/>
</dbReference>
<name>COAA_STRS7</name>
<gene>
    <name evidence="1" type="primary">coaA</name>
    <name type="ordered locus">SZO_10290</name>
</gene>
<accession>C0MG55</accession>
<protein>
    <recommendedName>
        <fullName evidence="1">Pantothenate kinase</fullName>
        <ecNumber evidence="1">2.7.1.33</ecNumber>
    </recommendedName>
    <alternativeName>
        <fullName evidence="1">Pantothenic acid kinase</fullName>
    </alternativeName>
</protein>